<evidence type="ECO:0000250" key="1"/>
<evidence type="ECO:0000305" key="2"/>
<sequence length="304" mass="31525">MKPAMSVEIGSLKLRNPVMTASGTFGYGEEFSQYVDLEKIGAFVTKGLSLKPRAGNPTPRIVETPGGMLNAIGLQNVGIDAFIQKKVPFLRSVNTPAIANFFGYTPDEYAELASRLDAIPEVAALEVNISCPNVKQGGIVFGTDPGCAASVVAACRAATQKTLIVKLSPNVTDIVEMAQACEGAGADALSVINTLTGMAIDLERRRPVLANVTGGLSGPAIKPVALRMVWQVARAVKVPVIGIGGIMSATDALEFILAGATAVQVGTASFVNPAAAQEIAEGMEQWLAERGIADISSLIGALEG</sequence>
<gene>
    <name type="primary">pyrD</name>
    <name type="ordered locus">Glov_2304</name>
</gene>
<protein>
    <recommendedName>
        <fullName>Dihydroorotate dehydrogenase B (NAD(+)), catalytic subunit</fullName>
        <shortName>DHOD B</shortName>
        <shortName>DHODase B</shortName>
        <shortName>DHOdehase B</shortName>
        <ecNumber>1.3.1.14</ecNumber>
    </recommendedName>
    <alternativeName>
        <fullName>Dihydroorotate oxidase B</fullName>
    </alternativeName>
    <alternativeName>
        <fullName>Orotate reductase (NADH)</fullName>
    </alternativeName>
</protein>
<reference key="1">
    <citation type="submission" date="2008-05" db="EMBL/GenBank/DDBJ databases">
        <title>Complete sequence of chromosome of Geobacter lovleyi SZ.</title>
        <authorList>
            <consortium name="US DOE Joint Genome Institute"/>
            <person name="Lucas S."/>
            <person name="Copeland A."/>
            <person name="Lapidus A."/>
            <person name="Glavina del Rio T."/>
            <person name="Dalin E."/>
            <person name="Tice H."/>
            <person name="Bruce D."/>
            <person name="Goodwin L."/>
            <person name="Pitluck S."/>
            <person name="Chertkov O."/>
            <person name="Meincke L."/>
            <person name="Brettin T."/>
            <person name="Detter J.C."/>
            <person name="Han C."/>
            <person name="Tapia R."/>
            <person name="Kuske C.R."/>
            <person name="Schmutz J."/>
            <person name="Larimer F."/>
            <person name="Land M."/>
            <person name="Hauser L."/>
            <person name="Kyrpides N."/>
            <person name="Mikhailova N."/>
            <person name="Sung Y."/>
            <person name="Fletcher K.E."/>
            <person name="Ritalahti K.M."/>
            <person name="Loeffler F.E."/>
            <person name="Richardson P."/>
        </authorList>
    </citation>
    <scope>NUCLEOTIDE SEQUENCE [LARGE SCALE GENOMIC DNA]</scope>
    <source>
        <strain>ATCC BAA-1151 / DSM 17278 / SZ</strain>
    </source>
</reference>
<proteinExistence type="inferred from homology"/>
<name>PYRDB_TRIL1</name>
<accession>B3E4T4</accession>
<keyword id="KW-0963">Cytoplasm</keyword>
<keyword id="KW-0285">Flavoprotein</keyword>
<keyword id="KW-0288">FMN</keyword>
<keyword id="KW-0520">NAD</keyword>
<keyword id="KW-0560">Oxidoreductase</keyword>
<keyword id="KW-0665">Pyrimidine biosynthesis</keyword>
<keyword id="KW-1185">Reference proteome</keyword>
<feature type="chain" id="PRO_1000100223" description="Dihydroorotate dehydrogenase B (NAD(+)), catalytic subunit">
    <location>
        <begin position="1"/>
        <end position="304"/>
    </location>
</feature>
<feature type="active site" description="Nucleophile">
    <location>
        <position position="131"/>
    </location>
</feature>
<feature type="binding site" evidence="1">
    <location>
        <position position="22"/>
    </location>
    <ligand>
        <name>FMN</name>
        <dbReference type="ChEBI" id="CHEBI:58210"/>
    </ligand>
</feature>
<feature type="binding site" evidence="1">
    <location>
        <begin position="46"/>
        <end position="47"/>
    </location>
    <ligand>
        <name>FMN</name>
        <dbReference type="ChEBI" id="CHEBI:58210"/>
    </ligand>
</feature>
<feature type="binding site" evidence="1">
    <location>
        <position position="46"/>
    </location>
    <ligand>
        <name>substrate</name>
    </ligand>
</feature>
<feature type="binding site" evidence="1">
    <location>
        <begin position="70"/>
        <end position="74"/>
    </location>
    <ligand>
        <name>substrate</name>
    </ligand>
</feature>
<feature type="binding site" evidence="1">
    <location>
        <position position="100"/>
    </location>
    <ligand>
        <name>FMN</name>
        <dbReference type="ChEBI" id="CHEBI:58210"/>
    </ligand>
</feature>
<feature type="binding site" evidence="1">
    <location>
        <position position="128"/>
    </location>
    <ligand>
        <name>FMN</name>
        <dbReference type="ChEBI" id="CHEBI:58210"/>
    </ligand>
</feature>
<feature type="binding site" evidence="1">
    <location>
        <position position="128"/>
    </location>
    <ligand>
        <name>substrate</name>
    </ligand>
</feature>
<feature type="binding site" evidence="1">
    <location>
        <position position="166"/>
    </location>
    <ligand>
        <name>FMN</name>
        <dbReference type="ChEBI" id="CHEBI:58210"/>
    </ligand>
</feature>
<feature type="binding site" evidence="1">
    <location>
        <position position="192"/>
    </location>
    <ligand>
        <name>FMN</name>
        <dbReference type="ChEBI" id="CHEBI:58210"/>
    </ligand>
</feature>
<feature type="binding site" evidence="1">
    <location>
        <begin position="193"/>
        <end position="194"/>
    </location>
    <ligand>
        <name>substrate</name>
    </ligand>
</feature>
<feature type="binding site" evidence="1">
    <location>
        <position position="218"/>
    </location>
    <ligand>
        <name>FMN</name>
        <dbReference type="ChEBI" id="CHEBI:58210"/>
    </ligand>
</feature>
<feature type="binding site" evidence="1">
    <location>
        <begin position="244"/>
        <end position="245"/>
    </location>
    <ligand>
        <name>FMN</name>
        <dbReference type="ChEBI" id="CHEBI:58210"/>
    </ligand>
</feature>
<feature type="binding site" evidence="1">
    <location>
        <begin position="266"/>
        <end position="267"/>
    </location>
    <ligand>
        <name>FMN</name>
        <dbReference type="ChEBI" id="CHEBI:58210"/>
    </ligand>
</feature>
<dbReference type="EC" id="1.3.1.14"/>
<dbReference type="EMBL" id="CP001089">
    <property type="protein sequence ID" value="ACD96020.1"/>
    <property type="molecule type" value="Genomic_DNA"/>
</dbReference>
<dbReference type="RefSeq" id="WP_012470354.1">
    <property type="nucleotide sequence ID" value="NC_010814.1"/>
</dbReference>
<dbReference type="SMR" id="B3E4T4"/>
<dbReference type="STRING" id="398767.Glov_2304"/>
<dbReference type="KEGG" id="glo:Glov_2304"/>
<dbReference type="eggNOG" id="COG0167">
    <property type="taxonomic scope" value="Bacteria"/>
</dbReference>
<dbReference type="HOGENOM" id="CLU_042042_0_0_7"/>
<dbReference type="OrthoDB" id="9802377at2"/>
<dbReference type="UniPathway" id="UPA00070">
    <property type="reaction ID" value="UER00945"/>
</dbReference>
<dbReference type="Proteomes" id="UP000002420">
    <property type="component" value="Chromosome"/>
</dbReference>
<dbReference type="GO" id="GO:0005737">
    <property type="term" value="C:cytoplasm"/>
    <property type="evidence" value="ECO:0007669"/>
    <property type="project" value="UniProtKB-SubCell"/>
</dbReference>
<dbReference type="GO" id="GO:0004589">
    <property type="term" value="F:dihydroorotate dehydrogenase (NAD+) activity"/>
    <property type="evidence" value="ECO:0007669"/>
    <property type="project" value="UniProtKB-EC"/>
</dbReference>
<dbReference type="GO" id="GO:0006207">
    <property type="term" value="P:'de novo' pyrimidine nucleobase biosynthetic process"/>
    <property type="evidence" value="ECO:0007669"/>
    <property type="project" value="InterPro"/>
</dbReference>
<dbReference type="GO" id="GO:0044205">
    <property type="term" value="P:'de novo' UMP biosynthetic process"/>
    <property type="evidence" value="ECO:0007669"/>
    <property type="project" value="UniProtKB-UniRule"/>
</dbReference>
<dbReference type="CDD" id="cd04740">
    <property type="entry name" value="DHOD_1B_like"/>
    <property type="match status" value="1"/>
</dbReference>
<dbReference type="FunFam" id="3.20.20.70:FF:000027">
    <property type="entry name" value="Dihydropyrimidine dehydrogenase [NADP(+)]"/>
    <property type="match status" value="1"/>
</dbReference>
<dbReference type="Gene3D" id="3.20.20.70">
    <property type="entry name" value="Aldolase class I"/>
    <property type="match status" value="1"/>
</dbReference>
<dbReference type="HAMAP" id="MF_00224">
    <property type="entry name" value="DHO_dh_type1"/>
    <property type="match status" value="1"/>
</dbReference>
<dbReference type="InterPro" id="IPR013785">
    <property type="entry name" value="Aldolase_TIM"/>
</dbReference>
<dbReference type="InterPro" id="IPR050074">
    <property type="entry name" value="DHO_dehydrogenase"/>
</dbReference>
<dbReference type="InterPro" id="IPR033888">
    <property type="entry name" value="DHOD_1B"/>
</dbReference>
<dbReference type="InterPro" id="IPR024920">
    <property type="entry name" value="Dihydroorotate_DH_1"/>
</dbReference>
<dbReference type="InterPro" id="IPR012135">
    <property type="entry name" value="Dihydroorotate_DH_1_2"/>
</dbReference>
<dbReference type="InterPro" id="IPR005720">
    <property type="entry name" value="Dihydroorotate_DH_cat"/>
</dbReference>
<dbReference type="InterPro" id="IPR001295">
    <property type="entry name" value="Dihydroorotate_DH_CS"/>
</dbReference>
<dbReference type="InterPro" id="IPR049622">
    <property type="entry name" value="Dihydroorotate_DH_I"/>
</dbReference>
<dbReference type="NCBIfam" id="NF005574">
    <property type="entry name" value="PRK07259.1"/>
    <property type="match status" value="1"/>
</dbReference>
<dbReference type="NCBIfam" id="TIGR01037">
    <property type="entry name" value="pyrD_sub1_fam"/>
    <property type="match status" value="1"/>
</dbReference>
<dbReference type="PANTHER" id="PTHR48109:SF1">
    <property type="entry name" value="DIHYDROOROTATE DEHYDROGENASE (FUMARATE)"/>
    <property type="match status" value="1"/>
</dbReference>
<dbReference type="PANTHER" id="PTHR48109">
    <property type="entry name" value="DIHYDROOROTATE DEHYDROGENASE (QUINONE), MITOCHONDRIAL-RELATED"/>
    <property type="match status" value="1"/>
</dbReference>
<dbReference type="Pfam" id="PF01180">
    <property type="entry name" value="DHO_dh"/>
    <property type="match status" value="1"/>
</dbReference>
<dbReference type="PIRSF" id="PIRSF000164">
    <property type="entry name" value="DHO_oxidase"/>
    <property type="match status" value="1"/>
</dbReference>
<dbReference type="SUPFAM" id="SSF51395">
    <property type="entry name" value="FMN-linked oxidoreductases"/>
    <property type="match status" value="1"/>
</dbReference>
<dbReference type="PROSITE" id="PS00911">
    <property type="entry name" value="DHODEHASE_1"/>
    <property type="match status" value="1"/>
</dbReference>
<dbReference type="PROSITE" id="PS00912">
    <property type="entry name" value="DHODEHASE_2"/>
    <property type="match status" value="1"/>
</dbReference>
<organism>
    <name type="scientific">Trichlorobacter lovleyi (strain ATCC BAA-1151 / DSM 17278 / SZ)</name>
    <name type="common">Geobacter lovleyi</name>
    <dbReference type="NCBI Taxonomy" id="398767"/>
    <lineage>
        <taxon>Bacteria</taxon>
        <taxon>Pseudomonadati</taxon>
        <taxon>Thermodesulfobacteriota</taxon>
        <taxon>Desulfuromonadia</taxon>
        <taxon>Geobacterales</taxon>
        <taxon>Geobacteraceae</taxon>
        <taxon>Trichlorobacter</taxon>
    </lineage>
</organism>
<comment type="function">
    <text evidence="1">Catalyzes the conversion of dihydroorotate to orotate with NAD(+) as electron acceptor.</text>
</comment>
<comment type="catalytic activity">
    <reaction>
        <text>(S)-dihydroorotate + NAD(+) = orotate + NADH + H(+)</text>
        <dbReference type="Rhea" id="RHEA:13513"/>
        <dbReference type="ChEBI" id="CHEBI:15378"/>
        <dbReference type="ChEBI" id="CHEBI:30839"/>
        <dbReference type="ChEBI" id="CHEBI:30864"/>
        <dbReference type="ChEBI" id="CHEBI:57540"/>
        <dbReference type="ChEBI" id="CHEBI:57945"/>
        <dbReference type="EC" id="1.3.1.14"/>
    </reaction>
</comment>
<comment type="cofactor">
    <cofactor evidence="1">
        <name>FMN</name>
        <dbReference type="ChEBI" id="CHEBI:58210"/>
    </cofactor>
    <text evidence="1">Binds 1 FMN per subunit.</text>
</comment>
<comment type="pathway">
    <text>Pyrimidine metabolism; UMP biosynthesis via de novo pathway; orotate from (S)-dihydroorotate (NAD(+) route): step 1/1.</text>
</comment>
<comment type="subunit">
    <text evidence="1">Heterotetramer of 2 PyrK and 2 PyrD type B subunits.</text>
</comment>
<comment type="subcellular location">
    <subcellularLocation>
        <location evidence="1">Cytoplasm</location>
    </subcellularLocation>
</comment>
<comment type="similarity">
    <text evidence="2">Belongs to the dihydroorotate dehydrogenase family. Type 1 subfamily.</text>
</comment>